<proteinExistence type="inferred from homology"/>
<protein>
    <recommendedName>
        <fullName evidence="1">DNA ligase</fullName>
        <ecNumber evidence="1">6.5.1.2</ecNumber>
    </recommendedName>
    <alternativeName>
        <fullName evidence="1">Polydeoxyribonucleotide synthase [NAD(+)]</fullName>
    </alternativeName>
</protein>
<gene>
    <name evidence="1" type="primary">ligA</name>
    <name type="ordered locus">VP0800</name>
</gene>
<comment type="function">
    <text evidence="1">DNA ligase that catalyzes the formation of phosphodiester linkages between 5'-phosphoryl and 3'-hydroxyl groups in double-stranded DNA using NAD as a coenzyme and as the energy source for the reaction. It is essential for DNA replication and repair of damaged DNA.</text>
</comment>
<comment type="catalytic activity">
    <reaction evidence="1">
        <text>NAD(+) + (deoxyribonucleotide)n-3'-hydroxyl + 5'-phospho-(deoxyribonucleotide)m = (deoxyribonucleotide)n+m + AMP + beta-nicotinamide D-nucleotide.</text>
        <dbReference type="EC" id="6.5.1.2"/>
    </reaction>
</comment>
<comment type="cofactor">
    <cofactor evidence="1">
        <name>Mg(2+)</name>
        <dbReference type="ChEBI" id="CHEBI:18420"/>
    </cofactor>
    <cofactor evidence="1">
        <name>Mn(2+)</name>
        <dbReference type="ChEBI" id="CHEBI:29035"/>
    </cofactor>
</comment>
<comment type="similarity">
    <text evidence="1">Belongs to the NAD-dependent DNA ligase family. LigA subfamily.</text>
</comment>
<feature type="chain" id="PRO_0000313507" description="DNA ligase">
    <location>
        <begin position="1"/>
        <end position="670"/>
    </location>
</feature>
<feature type="domain" description="BRCT" evidence="1">
    <location>
        <begin position="593"/>
        <end position="670"/>
    </location>
</feature>
<feature type="active site" description="N6-AMP-lysine intermediate" evidence="1">
    <location>
        <position position="116"/>
    </location>
</feature>
<feature type="binding site" evidence="1">
    <location>
        <begin position="33"/>
        <end position="37"/>
    </location>
    <ligand>
        <name>NAD(+)</name>
        <dbReference type="ChEBI" id="CHEBI:57540"/>
    </ligand>
</feature>
<feature type="binding site" evidence="1">
    <location>
        <begin position="82"/>
        <end position="83"/>
    </location>
    <ligand>
        <name>NAD(+)</name>
        <dbReference type="ChEBI" id="CHEBI:57540"/>
    </ligand>
</feature>
<feature type="binding site" evidence="1">
    <location>
        <position position="114"/>
    </location>
    <ligand>
        <name>NAD(+)</name>
        <dbReference type="ChEBI" id="CHEBI:57540"/>
    </ligand>
</feature>
<feature type="binding site" evidence="1">
    <location>
        <position position="137"/>
    </location>
    <ligand>
        <name>NAD(+)</name>
        <dbReference type="ChEBI" id="CHEBI:57540"/>
    </ligand>
</feature>
<feature type="binding site" evidence="1">
    <location>
        <position position="174"/>
    </location>
    <ligand>
        <name>NAD(+)</name>
        <dbReference type="ChEBI" id="CHEBI:57540"/>
    </ligand>
</feature>
<feature type="binding site" evidence="1">
    <location>
        <position position="291"/>
    </location>
    <ligand>
        <name>NAD(+)</name>
        <dbReference type="ChEBI" id="CHEBI:57540"/>
    </ligand>
</feature>
<feature type="binding site" evidence="1">
    <location>
        <position position="315"/>
    </location>
    <ligand>
        <name>NAD(+)</name>
        <dbReference type="ChEBI" id="CHEBI:57540"/>
    </ligand>
</feature>
<feature type="binding site" evidence="1">
    <location>
        <position position="409"/>
    </location>
    <ligand>
        <name>Zn(2+)</name>
        <dbReference type="ChEBI" id="CHEBI:29105"/>
    </ligand>
</feature>
<feature type="binding site" evidence="1">
    <location>
        <position position="412"/>
    </location>
    <ligand>
        <name>Zn(2+)</name>
        <dbReference type="ChEBI" id="CHEBI:29105"/>
    </ligand>
</feature>
<feature type="binding site" evidence="1">
    <location>
        <position position="427"/>
    </location>
    <ligand>
        <name>Zn(2+)</name>
        <dbReference type="ChEBI" id="CHEBI:29105"/>
    </ligand>
</feature>
<feature type="binding site" evidence="1">
    <location>
        <position position="433"/>
    </location>
    <ligand>
        <name>Zn(2+)</name>
        <dbReference type="ChEBI" id="CHEBI:29105"/>
    </ligand>
</feature>
<name>DNLJ_VIBPA</name>
<keyword id="KW-0227">DNA damage</keyword>
<keyword id="KW-0234">DNA repair</keyword>
<keyword id="KW-0235">DNA replication</keyword>
<keyword id="KW-0436">Ligase</keyword>
<keyword id="KW-0460">Magnesium</keyword>
<keyword id="KW-0464">Manganese</keyword>
<keyword id="KW-0479">Metal-binding</keyword>
<keyword id="KW-0520">NAD</keyword>
<keyword id="KW-0862">Zinc</keyword>
<reference key="1">
    <citation type="journal article" date="2003" name="Lancet">
        <title>Genome sequence of Vibrio parahaemolyticus: a pathogenic mechanism distinct from that of V. cholerae.</title>
        <authorList>
            <person name="Makino K."/>
            <person name="Oshima K."/>
            <person name="Kurokawa K."/>
            <person name="Yokoyama K."/>
            <person name="Uda T."/>
            <person name="Tagomori K."/>
            <person name="Iijima Y."/>
            <person name="Najima M."/>
            <person name="Nakano M."/>
            <person name="Yamashita A."/>
            <person name="Kubota Y."/>
            <person name="Kimura S."/>
            <person name="Yasunaga T."/>
            <person name="Honda T."/>
            <person name="Shinagawa H."/>
            <person name="Hattori M."/>
            <person name="Iida T."/>
        </authorList>
    </citation>
    <scope>NUCLEOTIDE SEQUENCE [LARGE SCALE GENOMIC DNA]</scope>
    <source>
        <strain>RIMD 2210633</strain>
    </source>
</reference>
<evidence type="ECO:0000255" key="1">
    <source>
        <dbReference type="HAMAP-Rule" id="MF_01588"/>
    </source>
</evidence>
<sequence>MSESVHQRLEELKESLHYHAVRYYVEDNPEIPDAEYDRLMRELLEIEAQHPDLVTVDSPSQRVGGKPLSEFSQVTHEVPMLSLDNAFDDSELDSFHKRAQDRIGGESIKQYCCEPKLDGLAVSLLYENGILVQAATRGDGTTGENITENVRTINAIPLKLRGDDWPARLEVRGEVFMPKAGFEKLNELARQKGEKVFVNPRNAAAGSLRQLDSRITASRPLSFYAYSVGVVQGADLAASHYERFLQIKSWGLPMCPETKRVDSLADVKTYYQHILQRRDALPYEIDGVVIKIDDIAVQERLGFVARAPRWAIAYKFPAQEEITTLNEVEFQVGRTGAITPVAKLEPVFVGGVTVSNATLHNADEIERLQVKIGDQVVIRRAGDVIPQVVSVIKERRPETARDIIFPTQCPVCGSHVERIEGEAVTRCTGGLVCQAQRKQALKHFVSRKALDVDGLGDKVIEQLVDREMVETPADLFKLSAGVLTVLERMGPKSAQNIVNALEKSKLTTLPRFLYSLGIREVGEATAANLAQHFKSLEAIQAATEEQLIAVQDIGVVVAKHITTFFEEEQNQAVVQDLLVQGIHWPEVSAPEQGAELPLEGKTVVLTGTLSQLGRTEAKEALQSLGAKVTGSVSKKTDILFAGENAGSKLAKAQELGIEIKTEQDLLELIN</sequence>
<accession>Q87RJ4</accession>
<organism>
    <name type="scientific">Vibrio parahaemolyticus serotype O3:K6 (strain RIMD 2210633)</name>
    <dbReference type="NCBI Taxonomy" id="223926"/>
    <lineage>
        <taxon>Bacteria</taxon>
        <taxon>Pseudomonadati</taxon>
        <taxon>Pseudomonadota</taxon>
        <taxon>Gammaproteobacteria</taxon>
        <taxon>Vibrionales</taxon>
        <taxon>Vibrionaceae</taxon>
        <taxon>Vibrio</taxon>
    </lineage>
</organism>
<dbReference type="EC" id="6.5.1.2" evidence="1"/>
<dbReference type="EMBL" id="BA000031">
    <property type="protein sequence ID" value="BAC59063.1"/>
    <property type="molecule type" value="Genomic_DNA"/>
</dbReference>
<dbReference type="RefSeq" id="NP_797179.1">
    <property type="nucleotide sequence ID" value="NC_004603.1"/>
</dbReference>
<dbReference type="RefSeq" id="WP_005478506.1">
    <property type="nucleotide sequence ID" value="NC_004603.1"/>
</dbReference>
<dbReference type="SMR" id="Q87RJ4"/>
<dbReference type="GeneID" id="1188297"/>
<dbReference type="KEGG" id="vpa:VP0800"/>
<dbReference type="PATRIC" id="fig|223926.6.peg.761"/>
<dbReference type="eggNOG" id="COG0272">
    <property type="taxonomic scope" value="Bacteria"/>
</dbReference>
<dbReference type="HOGENOM" id="CLU_007764_2_1_6"/>
<dbReference type="Proteomes" id="UP000002493">
    <property type="component" value="Chromosome 1"/>
</dbReference>
<dbReference type="GO" id="GO:0005829">
    <property type="term" value="C:cytosol"/>
    <property type="evidence" value="ECO:0007669"/>
    <property type="project" value="TreeGrafter"/>
</dbReference>
<dbReference type="GO" id="GO:0003677">
    <property type="term" value="F:DNA binding"/>
    <property type="evidence" value="ECO:0007669"/>
    <property type="project" value="InterPro"/>
</dbReference>
<dbReference type="GO" id="GO:0003911">
    <property type="term" value="F:DNA ligase (NAD+) activity"/>
    <property type="evidence" value="ECO:0007669"/>
    <property type="project" value="UniProtKB-UniRule"/>
</dbReference>
<dbReference type="GO" id="GO:0046872">
    <property type="term" value="F:metal ion binding"/>
    <property type="evidence" value="ECO:0007669"/>
    <property type="project" value="UniProtKB-KW"/>
</dbReference>
<dbReference type="GO" id="GO:0006281">
    <property type="term" value="P:DNA repair"/>
    <property type="evidence" value="ECO:0007669"/>
    <property type="project" value="UniProtKB-KW"/>
</dbReference>
<dbReference type="GO" id="GO:0006260">
    <property type="term" value="P:DNA replication"/>
    <property type="evidence" value="ECO:0007669"/>
    <property type="project" value="UniProtKB-KW"/>
</dbReference>
<dbReference type="CDD" id="cd17748">
    <property type="entry name" value="BRCT_DNA_ligase_like"/>
    <property type="match status" value="1"/>
</dbReference>
<dbReference type="CDD" id="cd00114">
    <property type="entry name" value="LIGANc"/>
    <property type="match status" value="1"/>
</dbReference>
<dbReference type="FunFam" id="1.10.150.20:FF:000006">
    <property type="entry name" value="DNA ligase"/>
    <property type="match status" value="1"/>
</dbReference>
<dbReference type="FunFam" id="1.10.150.20:FF:000007">
    <property type="entry name" value="DNA ligase"/>
    <property type="match status" value="1"/>
</dbReference>
<dbReference type="FunFam" id="1.10.287.610:FF:000002">
    <property type="entry name" value="DNA ligase"/>
    <property type="match status" value="1"/>
</dbReference>
<dbReference type="FunFam" id="2.40.50.140:FF:000012">
    <property type="entry name" value="DNA ligase"/>
    <property type="match status" value="1"/>
</dbReference>
<dbReference type="FunFam" id="3.30.470.30:FF:000001">
    <property type="entry name" value="DNA ligase"/>
    <property type="match status" value="1"/>
</dbReference>
<dbReference type="FunFam" id="6.20.10.30:FF:000001">
    <property type="entry name" value="DNA ligase"/>
    <property type="match status" value="1"/>
</dbReference>
<dbReference type="Gene3D" id="6.20.10.30">
    <property type="match status" value="1"/>
</dbReference>
<dbReference type="Gene3D" id="1.10.150.20">
    <property type="entry name" value="5' to 3' exonuclease, C-terminal subdomain"/>
    <property type="match status" value="2"/>
</dbReference>
<dbReference type="Gene3D" id="3.40.50.10190">
    <property type="entry name" value="BRCT domain"/>
    <property type="match status" value="1"/>
</dbReference>
<dbReference type="Gene3D" id="3.30.470.30">
    <property type="entry name" value="DNA ligase/mRNA capping enzyme"/>
    <property type="match status" value="1"/>
</dbReference>
<dbReference type="Gene3D" id="1.10.287.610">
    <property type="entry name" value="Helix hairpin bin"/>
    <property type="match status" value="1"/>
</dbReference>
<dbReference type="Gene3D" id="2.40.50.140">
    <property type="entry name" value="Nucleic acid-binding proteins"/>
    <property type="match status" value="1"/>
</dbReference>
<dbReference type="HAMAP" id="MF_01588">
    <property type="entry name" value="DNA_ligase_A"/>
    <property type="match status" value="1"/>
</dbReference>
<dbReference type="InterPro" id="IPR001357">
    <property type="entry name" value="BRCT_dom"/>
</dbReference>
<dbReference type="InterPro" id="IPR036420">
    <property type="entry name" value="BRCT_dom_sf"/>
</dbReference>
<dbReference type="InterPro" id="IPR041663">
    <property type="entry name" value="DisA/LigA_HHH"/>
</dbReference>
<dbReference type="InterPro" id="IPR001679">
    <property type="entry name" value="DNA_ligase"/>
</dbReference>
<dbReference type="InterPro" id="IPR018239">
    <property type="entry name" value="DNA_ligase_AS"/>
</dbReference>
<dbReference type="InterPro" id="IPR033136">
    <property type="entry name" value="DNA_ligase_CS"/>
</dbReference>
<dbReference type="InterPro" id="IPR013839">
    <property type="entry name" value="DNAligase_adenylation"/>
</dbReference>
<dbReference type="InterPro" id="IPR013840">
    <property type="entry name" value="DNAligase_N"/>
</dbReference>
<dbReference type="InterPro" id="IPR003583">
    <property type="entry name" value="Hlx-hairpin-Hlx_DNA-bd_motif"/>
</dbReference>
<dbReference type="InterPro" id="IPR012340">
    <property type="entry name" value="NA-bd_OB-fold"/>
</dbReference>
<dbReference type="InterPro" id="IPR004150">
    <property type="entry name" value="NAD_DNA_ligase_OB"/>
</dbReference>
<dbReference type="InterPro" id="IPR010994">
    <property type="entry name" value="RuvA_2-like"/>
</dbReference>
<dbReference type="InterPro" id="IPR004149">
    <property type="entry name" value="Znf_DNAligase_C4"/>
</dbReference>
<dbReference type="NCBIfam" id="TIGR00575">
    <property type="entry name" value="dnlj"/>
    <property type="match status" value="1"/>
</dbReference>
<dbReference type="NCBIfam" id="NF005932">
    <property type="entry name" value="PRK07956.1"/>
    <property type="match status" value="1"/>
</dbReference>
<dbReference type="PANTHER" id="PTHR23389">
    <property type="entry name" value="CHROMOSOME TRANSMISSION FIDELITY FACTOR 18"/>
    <property type="match status" value="1"/>
</dbReference>
<dbReference type="PANTHER" id="PTHR23389:SF9">
    <property type="entry name" value="DNA LIGASE"/>
    <property type="match status" value="1"/>
</dbReference>
<dbReference type="Pfam" id="PF00533">
    <property type="entry name" value="BRCT"/>
    <property type="match status" value="1"/>
</dbReference>
<dbReference type="Pfam" id="PF01653">
    <property type="entry name" value="DNA_ligase_aden"/>
    <property type="match status" value="1"/>
</dbReference>
<dbReference type="Pfam" id="PF03120">
    <property type="entry name" value="DNA_ligase_OB"/>
    <property type="match status" value="1"/>
</dbReference>
<dbReference type="Pfam" id="PF03119">
    <property type="entry name" value="DNA_ligase_ZBD"/>
    <property type="match status" value="1"/>
</dbReference>
<dbReference type="Pfam" id="PF12826">
    <property type="entry name" value="HHH_2"/>
    <property type="match status" value="1"/>
</dbReference>
<dbReference type="Pfam" id="PF14520">
    <property type="entry name" value="HHH_5"/>
    <property type="match status" value="1"/>
</dbReference>
<dbReference type="Pfam" id="PF22745">
    <property type="entry name" value="Nlig-Ia"/>
    <property type="match status" value="1"/>
</dbReference>
<dbReference type="PIRSF" id="PIRSF001604">
    <property type="entry name" value="LigA"/>
    <property type="match status" value="1"/>
</dbReference>
<dbReference type="SMART" id="SM00292">
    <property type="entry name" value="BRCT"/>
    <property type="match status" value="1"/>
</dbReference>
<dbReference type="SMART" id="SM00278">
    <property type="entry name" value="HhH1"/>
    <property type="match status" value="3"/>
</dbReference>
<dbReference type="SMART" id="SM00532">
    <property type="entry name" value="LIGANc"/>
    <property type="match status" value="1"/>
</dbReference>
<dbReference type="SUPFAM" id="SSF52113">
    <property type="entry name" value="BRCT domain"/>
    <property type="match status" value="1"/>
</dbReference>
<dbReference type="SUPFAM" id="SSF56091">
    <property type="entry name" value="DNA ligase/mRNA capping enzyme, catalytic domain"/>
    <property type="match status" value="1"/>
</dbReference>
<dbReference type="SUPFAM" id="SSF50249">
    <property type="entry name" value="Nucleic acid-binding proteins"/>
    <property type="match status" value="1"/>
</dbReference>
<dbReference type="SUPFAM" id="SSF47781">
    <property type="entry name" value="RuvA domain 2-like"/>
    <property type="match status" value="1"/>
</dbReference>
<dbReference type="PROSITE" id="PS50172">
    <property type="entry name" value="BRCT"/>
    <property type="match status" value="1"/>
</dbReference>
<dbReference type="PROSITE" id="PS01055">
    <property type="entry name" value="DNA_LIGASE_N1"/>
    <property type="match status" value="1"/>
</dbReference>
<dbReference type="PROSITE" id="PS01056">
    <property type="entry name" value="DNA_LIGASE_N2"/>
    <property type="match status" value="1"/>
</dbReference>